<reference key="1">
    <citation type="submission" date="1997-08" db="EMBL/GenBank/DDBJ databases">
        <authorList>
            <person name="Song J."/>
            <person name="Deretic V."/>
        </authorList>
    </citation>
    <scope>NUCLEOTIDE SEQUENCE [GENOMIC DNA]</scope>
    <source>
        <strain>CDC 1551 / Oshkosh</strain>
    </source>
</reference>
<reference key="2">
    <citation type="journal article" date="2002" name="J. Bacteriol.">
        <title>Whole-genome comparison of Mycobacterium tuberculosis clinical and laboratory strains.</title>
        <authorList>
            <person name="Fleischmann R.D."/>
            <person name="Alland D."/>
            <person name="Eisen J.A."/>
            <person name="Carpenter L."/>
            <person name="White O."/>
            <person name="Peterson J.D."/>
            <person name="DeBoy R.T."/>
            <person name="Dodson R.J."/>
            <person name="Gwinn M.L."/>
            <person name="Haft D.H."/>
            <person name="Hickey E.K."/>
            <person name="Kolonay J.F."/>
            <person name="Nelson W.C."/>
            <person name="Umayam L.A."/>
            <person name="Ermolaeva M.D."/>
            <person name="Salzberg S.L."/>
            <person name="Delcher A."/>
            <person name="Utterback T.R."/>
            <person name="Weidman J.F."/>
            <person name="Khouri H.M."/>
            <person name="Gill J."/>
            <person name="Mikula A."/>
            <person name="Bishai W."/>
            <person name="Jacobs W.R. Jr."/>
            <person name="Venter J.C."/>
            <person name="Fraser C.M."/>
        </authorList>
    </citation>
    <scope>NUCLEOTIDE SEQUENCE [LARGE SCALE GENOMIC DNA]</scope>
    <source>
        <strain>CDC 1551 / Oshkosh</strain>
    </source>
</reference>
<feature type="chain" id="PRO_0000427170" description="Transcriptional regulator FurA">
    <location>
        <begin position="1"/>
        <end position="147"/>
    </location>
</feature>
<feature type="region of interest" description="DNA-binding" evidence="1">
    <location>
        <begin position="1"/>
        <end position="85"/>
    </location>
</feature>
<feature type="region of interest" description="Dimerization" evidence="1">
    <location>
        <begin position="86"/>
        <end position="147"/>
    </location>
</feature>
<feature type="binding site" evidence="1">
    <location>
        <position position="34"/>
    </location>
    <ligand>
        <name>Zn(2+)</name>
        <dbReference type="ChEBI" id="CHEBI:29105"/>
    </ligand>
</feature>
<feature type="binding site" evidence="1">
    <location>
        <position position="82"/>
    </location>
    <ligand>
        <name>Zn(2+)</name>
        <dbReference type="ChEBI" id="CHEBI:29105"/>
    </ligand>
</feature>
<feature type="binding site" evidence="1">
    <location>
        <position position="87"/>
    </location>
    <ligand>
        <name>Fe cation</name>
        <dbReference type="ChEBI" id="CHEBI:24875"/>
    </ligand>
</feature>
<feature type="binding site" evidence="1">
    <location>
        <position position="89"/>
    </location>
    <ligand>
        <name>Fe cation</name>
        <dbReference type="ChEBI" id="CHEBI:24875"/>
    </ligand>
</feature>
<feature type="binding site" evidence="1">
    <location>
        <position position="91"/>
    </location>
    <ligand>
        <name>Zn(2+)</name>
        <dbReference type="ChEBI" id="CHEBI:29105"/>
    </ligand>
</feature>
<feature type="binding site" evidence="1">
    <location>
        <position position="94"/>
    </location>
    <ligand>
        <name>Zn(2+)</name>
        <dbReference type="ChEBI" id="CHEBI:29105"/>
    </ligand>
</feature>
<feature type="binding site" evidence="1">
    <location>
        <position position="97"/>
    </location>
    <ligand>
        <name>Zn(2+)</name>
        <dbReference type="ChEBI" id="CHEBI:29105"/>
    </ligand>
</feature>
<feature type="binding site" evidence="1">
    <location>
        <position position="102"/>
    </location>
    <ligand>
        <name>Zn(2+)</name>
        <dbReference type="ChEBI" id="CHEBI:29105"/>
    </ligand>
</feature>
<feature type="binding site" evidence="1">
    <location>
        <position position="109"/>
    </location>
    <ligand>
        <name>Fe cation</name>
        <dbReference type="ChEBI" id="CHEBI:24875"/>
    </ligand>
</feature>
<sequence length="147" mass="15892">MSSIPDYAEQLRTADLRVTRPRVAVLEAVNAHPHADTETIFGAVRFALPDVSRQAVYDVLHALTAAGLVRKIQPSGSVARYESRVGDNHHHIVCRSCGVIADVDCAVGEAPCLTASDHNGFLLDEAEVIYWGLCPDCSISDTSRSHP</sequence>
<comment type="function">
    <text evidence="1">Represses transcription of the catalase-peroxidase gene katG and its own transcription by binding to the promoter region in a redox-dependent manner.</text>
</comment>
<comment type="subunit">
    <text evidence="1">Homodimer.</text>
</comment>
<comment type="subcellular location">
    <subcellularLocation>
        <location evidence="1">Cytoplasm</location>
    </subcellularLocation>
</comment>
<comment type="similarity">
    <text evidence="2">Belongs to the Fur family.</text>
</comment>
<comment type="sequence caution" evidence="2">
    <conflict type="erroneous initiation">
        <sequence resource="EMBL-CDS" id="AAK46232"/>
    </conflict>
    <text>Extended N-terminus.</text>
</comment>
<accession>P9WN86</accession>
<accession>L0T9L6</accession>
<accession>O07715</accession>
<accession>O07724</accession>
<accession>P0A582</accession>
<evidence type="ECO:0000250" key="1"/>
<evidence type="ECO:0000305" key="2"/>
<protein>
    <recommendedName>
        <fullName>Transcriptional regulator FurA</fullName>
    </recommendedName>
</protein>
<dbReference type="EMBL" id="AE000516">
    <property type="protein sequence ID" value="AAK46232.1"/>
    <property type="status" value="ALT_INIT"/>
    <property type="molecule type" value="Genomic_DNA"/>
</dbReference>
<dbReference type="PIR" id="B70519">
    <property type="entry name" value="B70519"/>
</dbReference>
<dbReference type="RefSeq" id="WP_003899076.1">
    <property type="nucleotide sequence ID" value="NZ_KK341227.1"/>
</dbReference>
<dbReference type="SMR" id="P9WN86"/>
<dbReference type="KEGG" id="mtc:MT1960"/>
<dbReference type="PATRIC" id="fig|83331.31.peg.2110"/>
<dbReference type="HOGENOM" id="CLU_096072_4_0_11"/>
<dbReference type="Proteomes" id="UP000001020">
    <property type="component" value="Chromosome"/>
</dbReference>
<dbReference type="GO" id="GO:0005737">
    <property type="term" value="C:cytoplasm"/>
    <property type="evidence" value="ECO:0007669"/>
    <property type="project" value="UniProtKB-SubCell"/>
</dbReference>
<dbReference type="GO" id="GO:0003700">
    <property type="term" value="F:DNA-binding transcription factor activity"/>
    <property type="evidence" value="ECO:0007669"/>
    <property type="project" value="InterPro"/>
</dbReference>
<dbReference type="GO" id="GO:0000976">
    <property type="term" value="F:transcription cis-regulatory region binding"/>
    <property type="evidence" value="ECO:0007669"/>
    <property type="project" value="TreeGrafter"/>
</dbReference>
<dbReference type="GO" id="GO:0008270">
    <property type="term" value="F:zinc ion binding"/>
    <property type="evidence" value="ECO:0007669"/>
    <property type="project" value="TreeGrafter"/>
</dbReference>
<dbReference type="GO" id="GO:0045892">
    <property type="term" value="P:negative regulation of DNA-templated transcription"/>
    <property type="evidence" value="ECO:0007669"/>
    <property type="project" value="TreeGrafter"/>
</dbReference>
<dbReference type="GO" id="GO:1900376">
    <property type="term" value="P:regulation of secondary metabolite biosynthetic process"/>
    <property type="evidence" value="ECO:0007669"/>
    <property type="project" value="TreeGrafter"/>
</dbReference>
<dbReference type="CDD" id="cd07153">
    <property type="entry name" value="Fur_like"/>
    <property type="match status" value="1"/>
</dbReference>
<dbReference type="FunFam" id="3.30.1490.190:FF:000011">
    <property type="entry name" value="Fur family transcriptional regulator"/>
    <property type="match status" value="1"/>
</dbReference>
<dbReference type="FunFam" id="1.10.10.10:FF:000729">
    <property type="entry name" value="Transcriptional regulator FurA"/>
    <property type="match status" value="1"/>
</dbReference>
<dbReference type="Gene3D" id="3.30.1490.190">
    <property type="match status" value="1"/>
</dbReference>
<dbReference type="Gene3D" id="1.10.10.10">
    <property type="entry name" value="Winged helix-like DNA-binding domain superfamily/Winged helix DNA-binding domain"/>
    <property type="match status" value="1"/>
</dbReference>
<dbReference type="InterPro" id="IPR002481">
    <property type="entry name" value="FUR"/>
</dbReference>
<dbReference type="InterPro" id="IPR043135">
    <property type="entry name" value="Fur_C"/>
</dbReference>
<dbReference type="InterPro" id="IPR036388">
    <property type="entry name" value="WH-like_DNA-bd_sf"/>
</dbReference>
<dbReference type="InterPro" id="IPR036390">
    <property type="entry name" value="WH_DNA-bd_sf"/>
</dbReference>
<dbReference type="PANTHER" id="PTHR33202:SF18">
    <property type="entry name" value="TRANSCRIPTIONAL REGULATOR FURA"/>
    <property type="match status" value="1"/>
</dbReference>
<dbReference type="PANTHER" id="PTHR33202">
    <property type="entry name" value="ZINC UPTAKE REGULATION PROTEIN"/>
    <property type="match status" value="1"/>
</dbReference>
<dbReference type="Pfam" id="PF01475">
    <property type="entry name" value="FUR"/>
    <property type="match status" value="1"/>
</dbReference>
<dbReference type="SUPFAM" id="SSF46785">
    <property type="entry name" value="Winged helix' DNA-binding domain"/>
    <property type="match status" value="1"/>
</dbReference>
<gene>
    <name type="primary">furA</name>
    <name type="synonym">fur</name>
    <name type="ordered locus">MT1960</name>
</gene>
<organism>
    <name type="scientific">Mycobacterium tuberculosis (strain CDC 1551 / Oshkosh)</name>
    <dbReference type="NCBI Taxonomy" id="83331"/>
    <lineage>
        <taxon>Bacteria</taxon>
        <taxon>Bacillati</taxon>
        <taxon>Actinomycetota</taxon>
        <taxon>Actinomycetes</taxon>
        <taxon>Mycobacteriales</taxon>
        <taxon>Mycobacteriaceae</taxon>
        <taxon>Mycobacterium</taxon>
        <taxon>Mycobacterium tuberculosis complex</taxon>
    </lineage>
</organism>
<keyword id="KW-0963">Cytoplasm</keyword>
<keyword id="KW-0238">DNA-binding</keyword>
<keyword id="KW-0408">Iron</keyword>
<keyword id="KW-0479">Metal-binding</keyword>
<keyword id="KW-1185">Reference proteome</keyword>
<keyword id="KW-0678">Repressor</keyword>
<keyword id="KW-0804">Transcription</keyword>
<keyword id="KW-0805">Transcription regulation</keyword>
<keyword id="KW-0862">Zinc</keyword>
<proteinExistence type="inferred from homology"/>
<name>FURA_MYCTO</name>